<organism>
    <name type="scientific">Escherichia coli O6:K15:H31 (strain 536 / UPEC)</name>
    <dbReference type="NCBI Taxonomy" id="362663"/>
    <lineage>
        <taxon>Bacteria</taxon>
        <taxon>Pseudomonadati</taxon>
        <taxon>Pseudomonadota</taxon>
        <taxon>Gammaproteobacteria</taxon>
        <taxon>Enterobacterales</taxon>
        <taxon>Enterobacteriaceae</taxon>
        <taxon>Escherichia</taxon>
    </lineage>
</organism>
<comment type="function">
    <text evidence="1">Confers resistance to fosfomycin and deoxycholate.</text>
</comment>
<comment type="subcellular location">
    <subcellularLocation>
        <location evidence="1">Cell inner membrane</location>
        <topology evidence="1">Multi-pass membrane protein</topology>
    </subcellularLocation>
</comment>
<comment type="similarity">
    <text evidence="1">Belongs to the major facilitator superfamily. DHA1 family. MdtG (TC 2.A.1.2.20) subfamily.</text>
</comment>
<evidence type="ECO:0000255" key="1">
    <source>
        <dbReference type="HAMAP-Rule" id="MF_01528"/>
    </source>
</evidence>
<reference key="1">
    <citation type="journal article" date="2006" name="Mol. Microbiol.">
        <title>Role of pathogenicity island-associated integrases in the genome plasticity of uropathogenic Escherichia coli strain 536.</title>
        <authorList>
            <person name="Hochhut B."/>
            <person name="Wilde C."/>
            <person name="Balling G."/>
            <person name="Middendorf B."/>
            <person name="Dobrindt U."/>
            <person name="Brzuszkiewicz E."/>
            <person name="Gottschalk G."/>
            <person name="Carniel E."/>
            <person name="Hacker J."/>
        </authorList>
    </citation>
    <scope>NUCLEOTIDE SEQUENCE [LARGE SCALE GENOMIC DNA]</scope>
    <source>
        <strain>536 / UPEC</strain>
    </source>
</reference>
<proteinExistence type="inferred from homology"/>
<dbReference type="EMBL" id="CP000247">
    <property type="protein sequence ID" value="ABG69059.1"/>
    <property type="molecule type" value="Genomic_DNA"/>
</dbReference>
<dbReference type="RefSeq" id="WP_000074159.1">
    <property type="nucleotide sequence ID" value="NC_008253.1"/>
</dbReference>
<dbReference type="SMR" id="Q0TJ20"/>
<dbReference type="KEGG" id="ecp:ECP_1046"/>
<dbReference type="HOGENOM" id="CLU_001265_57_3_6"/>
<dbReference type="Proteomes" id="UP000009182">
    <property type="component" value="Chromosome"/>
</dbReference>
<dbReference type="GO" id="GO:0005886">
    <property type="term" value="C:plasma membrane"/>
    <property type="evidence" value="ECO:0007669"/>
    <property type="project" value="UniProtKB-SubCell"/>
</dbReference>
<dbReference type="GO" id="GO:0022857">
    <property type="term" value="F:transmembrane transporter activity"/>
    <property type="evidence" value="ECO:0007669"/>
    <property type="project" value="UniProtKB-UniRule"/>
</dbReference>
<dbReference type="GO" id="GO:0046677">
    <property type="term" value="P:response to antibiotic"/>
    <property type="evidence" value="ECO:0007669"/>
    <property type="project" value="UniProtKB-KW"/>
</dbReference>
<dbReference type="CDD" id="cd17391">
    <property type="entry name" value="MFS_MdtG_MDR_like"/>
    <property type="match status" value="1"/>
</dbReference>
<dbReference type="FunFam" id="1.20.1250.20:FF:000020">
    <property type="entry name" value="Multidrug resistance protein MdtG"/>
    <property type="match status" value="1"/>
</dbReference>
<dbReference type="FunFam" id="1.20.1250.20:FF:000022">
    <property type="entry name" value="Multidrug resistance protein MdtG"/>
    <property type="match status" value="1"/>
</dbReference>
<dbReference type="Gene3D" id="1.20.1250.20">
    <property type="entry name" value="MFS general substrate transporter like domains"/>
    <property type="match status" value="2"/>
</dbReference>
<dbReference type="HAMAP" id="MF_01528">
    <property type="entry name" value="MFS_MdtG"/>
    <property type="match status" value="1"/>
</dbReference>
<dbReference type="InterPro" id="IPR011701">
    <property type="entry name" value="MFS"/>
</dbReference>
<dbReference type="InterPro" id="IPR020846">
    <property type="entry name" value="MFS_dom"/>
</dbReference>
<dbReference type="InterPro" id="IPR050497">
    <property type="entry name" value="MFS_MdtG_subfamily"/>
</dbReference>
<dbReference type="InterPro" id="IPR036259">
    <property type="entry name" value="MFS_trans_sf"/>
</dbReference>
<dbReference type="InterPro" id="IPR023692">
    <property type="entry name" value="Mutidrug-R_MdtG"/>
</dbReference>
<dbReference type="InterPro" id="IPR001958">
    <property type="entry name" value="Tet-R_TetA/multi-R_MdtG-like"/>
</dbReference>
<dbReference type="NCBIfam" id="NF007372">
    <property type="entry name" value="PRK09874.1"/>
    <property type="match status" value="1"/>
</dbReference>
<dbReference type="PANTHER" id="PTHR43414">
    <property type="entry name" value="MULTIDRUG RESISTANCE PROTEIN MDTG"/>
    <property type="match status" value="1"/>
</dbReference>
<dbReference type="PANTHER" id="PTHR43414:SF6">
    <property type="entry name" value="MULTIDRUG RESISTANCE PROTEIN MDTG"/>
    <property type="match status" value="1"/>
</dbReference>
<dbReference type="Pfam" id="PF07690">
    <property type="entry name" value="MFS_1"/>
    <property type="match status" value="1"/>
</dbReference>
<dbReference type="PRINTS" id="PR01035">
    <property type="entry name" value="TCRTETA"/>
</dbReference>
<dbReference type="SUPFAM" id="SSF103473">
    <property type="entry name" value="MFS general substrate transporter"/>
    <property type="match status" value="1"/>
</dbReference>
<dbReference type="PROSITE" id="PS50850">
    <property type="entry name" value="MFS"/>
    <property type="match status" value="1"/>
</dbReference>
<gene>
    <name evidence="1" type="primary">mdtG</name>
    <name type="ordered locus">ECP_1046</name>
</gene>
<feature type="chain" id="PRO_0000280212" description="Multidrug resistance protein MdtG">
    <location>
        <begin position="1"/>
        <end position="408"/>
    </location>
</feature>
<feature type="transmembrane region" description="Helical" evidence="1">
    <location>
        <begin position="16"/>
        <end position="36"/>
    </location>
</feature>
<feature type="transmembrane region" description="Helical" evidence="1">
    <location>
        <begin position="58"/>
        <end position="78"/>
    </location>
</feature>
<feature type="transmembrane region" description="Helical" evidence="1">
    <location>
        <begin position="92"/>
        <end position="112"/>
    </location>
</feature>
<feature type="transmembrane region" description="Helical" evidence="1">
    <location>
        <begin position="115"/>
        <end position="135"/>
    </location>
</feature>
<feature type="transmembrane region" description="Helical" evidence="1">
    <location>
        <begin position="146"/>
        <end position="166"/>
    </location>
</feature>
<feature type="transmembrane region" description="Helical" evidence="1">
    <location>
        <begin position="173"/>
        <end position="193"/>
    </location>
</feature>
<feature type="transmembrane region" description="Helical" evidence="1">
    <location>
        <begin position="224"/>
        <end position="244"/>
    </location>
</feature>
<feature type="transmembrane region" description="Helical" evidence="1">
    <location>
        <begin position="256"/>
        <end position="276"/>
    </location>
</feature>
<feature type="transmembrane region" description="Helical" evidence="1">
    <location>
        <begin position="290"/>
        <end position="310"/>
    </location>
</feature>
<feature type="transmembrane region" description="Helical" evidence="1">
    <location>
        <begin position="319"/>
        <end position="339"/>
    </location>
</feature>
<feature type="transmembrane region" description="Helical" evidence="1">
    <location>
        <begin position="378"/>
        <end position="398"/>
    </location>
</feature>
<accession>Q0TJ20</accession>
<sequence length="408" mass="43881">MSPCENDTPINWKRNLIVAWLGCFLTGAAFSLVMPFLPLYVEQLGVTGHSALNMWSGIVFSITFLFSAIASPFWGGLADRKGRKIMLLRSALGMGIVMVLMGLAQNIWQFLILRALLGLLGGFVPNANALIATQVPRNKSGWALGTLSTGGVSGALLGPMAGGLLADSYGLRPVFFITASVLILCFFVTLFCIREKFQPVSKKEMLHMREVVTSLKNPKLVLSLFVTTLIIQVATGSIAPILTLYVRELAGNVSNVAFISGMIASVPGVAALLSAPRLGKLGDRIGPEKILITALIFSVLLLIPMSYVQTPLQLGILRFLLGAADGALLPAVQTLLVYNSSNQIAGRIFSYNQSFRDIGNVTGPLMGAAISANYGFRAVFLVTAGVVLFNAVYSWNSLRRRRIPQISN</sequence>
<protein>
    <recommendedName>
        <fullName evidence="1">Multidrug resistance protein MdtG</fullName>
    </recommendedName>
</protein>
<keyword id="KW-0046">Antibiotic resistance</keyword>
<keyword id="KW-0997">Cell inner membrane</keyword>
<keyword id="KW-1003">Cell membrane</keyword>
<keyword id="KW-0472">Membrane</keyword>
<keyword id="KW-0812">Transmembrane</keyword>
<keyword id="KW-1133">Transmembrane helix</keyword>
<keyword id="KW-0813">Transport</keyword>
<name>MDTG_ECOL5</name>